<evidence type="ECO:0000255" key="1">
    <source>
        <dbReference type="HAMAP-Rule" id="MF_00236"/>
    </source>
</evidence>
<gene>
    <name evidence="1" type="primary">tatA</name>
    <name type="ordered locus">Fjoh_1023</name>
</gene>
<reference key="1">
    <citation type="journal article" date="2009" name="Appl. Environ. Microbiol.">
        <title>Novel features of the polysaccharide-digesting gliding bacterium Flavobacterium johnsoniae as revealed by genome sequence analysis.</title>
        <authorList>
            <person name="McBride M.J."/>
            <person name="Xie G."/>
            <person name="Martens E.C."/>
            <person name="Lapidus A."/>
            <person name="Henrissat B."/>
            <person name="Rhodes R.G."/>
            <person name="Goltsman E."/>
            <person name="Wang W."/>
            <person name="Xu J."/>
            <person name="Hunnicutt D.W."/>
            <person name="Staroscik A.M."/>
            <person name="Hoover T.R."/>
            <person name="Cheng Y.Q."/>
            <person name="Stein J.L."/>
        </authorList>
    </citation>
    <scope>NUCLEOTIDE SEQUENCE [LARGE SCALE GENOMIC DNA]</scope>
    <source>
        <strain>ATCC 17061 / DSM 2064 / JCM 8514 / BCRC 14874 / CCUG 350202 / NBRC 14942 / NCIMB 11054 / UW101</strain>
    </source>
</reference>
<dbReference type="EMBL" id="CP000685">
    <property type="protein sequence ID" value="ABQ04056.1"/>
    <property type="molecule type" value="Genomic_DNA"/>
</dbReference>
<dbReference type="RefSeq" id="WP_012023109.1">
    <property type="nucleotide sequence ID" value="NC_009441.1"/>
</dbReference>
<dbReference type="SMR" id="A5FL65"/>
<dbReference type="STRING" id="376686.Fjoh_1023"/>
<dbReference type="KEGG" id="fjo:Fjoh_1023"/>
<dbReference type="eggNOG" id="COG1826">
    <property type="taxonomic scope" value="Bacteria"/>
</dbReference>
<dbReference type="HOGENOM" id="CLU_086034_6_2_10"/>
<dbReference type="Proteomes" id="UP000006694">
    <property type="component" value="Chromosome"/>
</dbReference>
<dbReference type="GO" id="GO:0033281">
    <property type="term" value="C:TAT protein transport complex"/>
    <property type="evidence" value="ECO:0007669"/>
    <property type="project" value="UniProtKB-UniRule"/>
</dbReference>
<dbReference type="GO" id="GO:0008320">
    <property type="term" value="F:protein transmembrane transporter activity"/>
    <property type="evidence" value="ECO:0007669"/>
    <property type="project" value="UniProtKB-UniRule"/>
</dbReference>
<dbReference type="GO" id="GO:0043953">
    <property type="term" value="P:protein transport by the Tat complex"/>
    <property type="evidence" value="ECO:0007669"/>
    <property type="project" value="UniProtKB-UniRule"/>
</dbReference>
<dbReference type="Gene3D" id="1.20.5.3310">
    <property type="match status" value="1"/>
</dbReference>
<dbReference type="HAMAP" id="MF_00236">
    <property type="entry name" value="TatA_E"/>
    <property type="match status" value="1"/>
</dbReference>
<dbReference type="InterPro" id="IPR003369">
    <property type="entry name" value="TatA/B/E"/>
</dbReference>
<dbReference type="InterPro" id="IPR006312">
    <property type="entry name" value="TatA/E"/>
</dbReference>
<dbReference type="NCBIfam" id="TIGR01411">
    <property type="entry name" value="tatAE"/>
    <property type="match status" value="1"/>
</dbReference>
<dbReference type="PANTHER" id="PTHR42982">
    <property type="entry name" value="SEC-INDEPENDENT PROTEIN TRANSLOCASE PROTEIN TATA"/>
    <property type="match status" value="1"/>
</dbReference>
<dbReference type="PANTHER" id="PTHR42982:SF1">
    <property type="entry name" value="SEC-INDEPENDENT PROTEIN TRANSLOCASE PROTEIN TATA"/>
    <property type="match status" value="1"/>
</dbReference>
<dbReference type="Pfam" id="PF02416">
    <property type="entry name" value="TatA_B_E"/>
    <property type="match status" value="1"/>
</dbReference>
<protein>
    <recommendedName>
        <fullName evidence="1">Sec-independent protein translocase protein TatA</fullName>
    </recommendedName>
</protein>
<proteinExistence type="inferred from homology"/>
<feature type="chain" id="PRO_1000078306" description="Sec-independent protein translocase protein TatA">
    <location>
        <begin position="1"/>
        <end position="59"/>
    </location>
</feature>
<feature type="transmembrane region" description="Helical" evidence="1">
    <location>
        <begin position="1"/>
        <end position="21"/>
    </location>
</feature>
<comment type="function">
    <text evidence="1">Part of the twin-arginine translocation (Tat) system that transports large folded proteins containing a characteristic twin-arginine motif in their signal peptide across membranes. TatA could form the protein-conducting channel of the Tat system.</text>
</comment>
<comment type="subunit">
    <text evidence="1">Forms a complex with TatC.</text>
</comment>
<comment type="subcellular location">
    <subcellularLocation>
        <location evidence="1">Cell inner membrane</location>
        <topology evidence="1">Single-pass membrane protein</topology>
    </subcellularLocation>
</comment>
<comment type="similarity">
    <text evidence="1">Belongs to the TatA/E family.</text>
</comment>
<accession>A5FL65</accession>
<keyword id="KW-0997">Cell inner membrane</keyword>
<keyword id="KW-1003">Cell membrane</keyword>
<keyword id="KW-0472">Membrane</keyword>
<keyword id="KW-0653">Protein transport</keyword>
<keyword id="KW-0811">Translocation</keyword>
<keyword id="KW-0812">Transmembrane</keyword>
<keyword id="KW-1133">Transmembrane helix</keyword>
<keyword id="KW-0813">Transport</keyword>
<name>TATA_FLAJ1</name>
<sequence length="59" mass="6377">MGRLGLTEILVIVGIVILLFGGKKIPELMKGLGSGIKEFKNAAKDDQPAPAKKQEEEQK</sequence>
<organism>
    <name type="scientific">Flavobacterium johnsoniae (strain ATCC 17061 / DSM 2064 / JCM 8514 / BCRC 14874 / CCUG 350202 / NBRC 14942 / NCIMB 11054 / UW101)</name>
    <name type="common">Cytophaga johnsonae</name>
    <dbReference type="NCBI Taxonomy" id="376686"/>
    <lineage>
        <taxon>Bacteria</taxon>
        <taxon>Pseudomonadati</taxon>
        <taxon>Bacteroidota</taxon>
        <taxon>Flavobacteriia</taxon>
        <taxon>Flavobacteriales</taxon>
        <taxon>Flavobacteriaceae</taxon>
        <taxon>Flavobacterium</taxon>
    </lineage>
</organism>